<comment type="function">
    <text evidence="1">Catalyzes the reversible cyclization of carbamoyl aspartate to dihydroorotate.</text>
</comment>
<comment type="catalytic activity">
    <reaction evidence="1">
        <text>(S)-dihydroorotate + H2O = N-carbamoyl-L-aspartate + H(+)</text>
        <dbReference type="Rhea" id="RHEA:24296"/>
        <dbReference type="ChEBI" id="CHEBI:15377"/>
        <dbReference type="ChEBI" id="CHEBI:15378"/>
        <dbReference type="ChEBI" id="CHEBI:30864"/>
        <dbReference type="ChEBI" id="CHEBI:32814"/>
        <dbReference type="EC" id="3.5.2.3"/>
    </reaction>
</comment>
<comment type="cofactor">
    <cofactor evidence="1">
        <name>Zn(2+)</name>
        <dbReference type="ChEBI" id="CHEBI:29105"/>
    </cofactor>
    <text evidence="1">Binds 2 Zn(2+) ions per subunit.</text>
</comment>
<comment type="pathway">
    <text evidence="1">Pyrimidine metabolism; UMP biosynthesis via de novo pathway; (S)-dihydroorotate from bicarbonate: step 3/3.</text>
</comment>
<comment type="subunit">
    <text evidence="1">Homodimer.</text>
</comment>
<comment type="similarity">
    <text evidence="1">Belongs to the metallo-dependent hydrolases superfamily. DHOase family. Class II DHOase subfamily.</text>
</comment>
<dbReference type="EC" id="3.5.2.3" evidence="1"/>
<dbReference type="EMBL" id="CP000362">
    <property type="protein sequence ID" value="ABG32737.1"/>
    <property type="molecule type" value="Genomic_DNA"/>
</dbReference>
<dbReference type="RefSeq" id="WP_011569353.1">
    <property type="nucleotide sequence ID" value="NC_008209.1"/>
</dbReference>
<dbReference type="SMR" id="Q163V6"/>
<dbReference type="STRING" id="375451.RD1_3235"/>
<dbReference type="KEGG" id="rde:RD1_3235"/>
<dbReference type="eggNOG" id="COG0418">
    <property type="taxonomic scope" value="Bacteria"/>
</dbReference>
<dbReference type="HOGENOM" id="CLU_041558_1_0_5"/>
<dbReference type="OrthoDB" id="9808095at2"/>
<dbReference type="UniPathway" id="UPA00070">
    <property type="reaction ID" value="UER00117"/>
</dbReference>
<dbReference type="Proteomes" id="UP000007029">
    <property type="component" value="Chromosome"/>
</dbReference>
<dbReference type="GO" id="GO:0005829">
    <property type="term" value="C:cytosol"/>
    <property type="evidence" value="ECO:0007669"/>
    <property type="project" value="TreeGrafter"/>
</dbReference>
<dbReference type="GO" id="GO:0004151">
    <property type="term" value="F:dihydroorotase activity"/>
    <property type="evidence" value="ECO:0007669"/>
    <property type="project" value="UniProtKB-UniRule"/>
</dbReference>
<dbReference type="GO" id="GO:0008270">
    <property type="term" value="F:zinc ion binding"/>
    <property type="evidence" value="ECO:0007669"/>
    <property type="project" value="UniProtKB-UniRule"/>
</dbReference>
<dbReference type="GO" id="GO:0006207">
    <property type="term" value="P:'de novo' pyrimidine nucleobase biosynthetic process"/>
    <property type="evidence" value="ECO:0007669"/>
    <property type="project" value="TreeGrafter"/>
</dbReference>
<dbReference type="GO" id="GO:0044205">
    <property type="term" value="P:'de novo' UMP biosynthetic process"/>
    <property type="evidence" value="ECO:0007669"/>
    <property type="project" value="UniProtKB-UniRule"/>
</dbReference>
<dbReference type="CDD" id="cd01294">
    <property type="entry name" value="DHOase"/>
    <property type="match status" value="1"/>
</dbReference>
<dbReference type="Gene3D" id="3.20.20.140">
    <property type="entry name" value="Metal-dependent hydrolases"/>
    <property type="match status" value="1"/>
</dbReference>
<dbReference type="HAMAP" id="MF_00219">
    <property type="entry name" value="PyrC_classII"/>
    <property type="match status" value="1"/>
</dbReference>
<dbReference type="InterPro" id="IPR006680">
    <property type="entry name" value="Amidohydro-rel"/>
</dbReference>
<dbReference type="InterPro" id="IPR004721">
    <property type="entry name" value="DHOdimr"/>
</dbReference>
<dbReference type="InterPro" id="IPR002195">
    <property type="entry name" value="Dihydroorotase_CS"/>
</dbReference>
<dbReference type="InterPro" id="IPR032466">
    <property type="entry name" value="Metal_Hydrolase"/>
</dbReference>
<dbReference type="NCBIfam" id="TIGR00856">
    <property type="entry name" value="pyrC_dimer"/>
    <property type="match status" value="1"/>
</dbReference>
<dbReference type="PANTHER" id="PTHR43137">
    <property type="entry name" value="DIHYDROOROTASE"/>
    <property type="match status" value="1"/>
</dbReference>
<dbReference type="PANTHER" id="PTHR43137:SF1">
    <property type="entry name" value="DIHYDROOROTASE"/>
    <property type="match status" value="1"/>
</dbReference>
<dbReference type="Pfam" id="PF01979">
    <property type="entry name" value="Amidohydro_1"/>
    <property type="match status" value="1"/>
</dbReference>
<dbReference type="PIRSF" id="PIRSF001237">
    <property type="entry name" value="DHOdimr"/>
    <property type="match status" value="1"/>
</dbReference>
<dbReference type="SUPFAM" id="SSF51556">
    <property type="entry name" value="Metallo-dependent hydrolases"/>
    <property type="match status" value="1"/>
</dbReference>
<dbReference type="PROSITE" id="PS00482">
    <property type="entry name" value="DIHYDROOROTASE_1"/>
    <property type="match status" value="1"/>
</dbReference>
<dbReference type="PROSITE" id="PS00483">
    <property type="entry name" value="DIHYDROOROTASE_2"/>
    <property type="match status" value="1"/>
</dbReference>
<reference key="1">
    <citation type="journal article" date="2007" name="J. Bacteriol.">
        <title>The complete genome sequence of Roseobacter denitrificans reveals a mixotrophic rather than photosynthetic metabolism.</title>
        <authorList>
            <person name="Swingley W.D."/>
            <person name="Sadekar S."/>
            <person name="Mastrian S.D."/>
            <person name="Matthies H.J."/>
            <person name="Hao J."/>
            <person name="Ramos H."/>
            <person name="Acharya C.R."/>
            <person name="Conrad A.L."/>
            <person name="Taylor H.L."/>
            <person name="Dejesa L.C."/>
            <person name="Shah M.K."/>
            <person name="O'Huallachain M.E."/>
            <person name="Lince M.T."/>
            <person name="Blankenship R.E."/>
            <person name="Beatty J.T."/>
            <person name="Touchman J.W."/>
        </authorList>
    </citation>
    <scope>NUCLEOTIDE SEQUENCE [LARGE SCALE GENOMIC DNA]</scope>
    <source>
        <strain>ATCC 33942 / OCh 114</strain>
    </source>
</reference>
<evidence type="ECO:0000255" key="1">
    <source>
        <dbReference type="HAMAP-Rule" id="MF_00219"/>
    </source>
</evidence>
<keyword id="KW-0378">Hydrolase</keyword>
<keyword id="KW-0479">Metal-binding</keyword>
<keyword id="KW-0665">Pyrimidine biosynthesis</keyword>
<keyword id="KW-1185">Reference proteome</keyword>
<keyword id="KW-0862">Zinc</keyword>
<feature type="chain" id="PRO_1000024047" description="Dihydroorotase">
    <location>
        <begin position="1"/>
        <end position="344"/>
    </location>
</feature>
<feature type="active site" evidence="1">
    <location>
        <position position="248"/>
    </location>
</feature>
<feature type="binding site" evidence="1">
    <location>
        <position position="14"/>
    </location>
    <ligand>
        <name>Zn(2+)</name>
        <dbReference type="ChEBI" id="CHEBI:29105"/>
        <label>1</label>
    </ligand>
</feature>
<feature type="binding site" evidence="1">
    <location>
        <begin position="16"/>
        <end position="18"/>
    </location>
    <ligand>
        <name>substrate</name>
    </ligand>
</feature>
<feature type="binding site" evidence="1">
    <location>
        <position position="16"/>
    </location>
    <ligand>
        <name>Zn(2+)</name>
        <dbReference type="ChEBI" id="CHEBI:29105"/>
        <label>1</label>
    </ligand>
</feature>
<feature type="binding site" evidence="1">
    <location>
        <position position="42"/>
    </location>
    <ligand>
        <name>substrate</name>
    </ligand>
</feature>
<feature type="binding site" description="via carbamate group" evidence="1">
    <location>
        <position position="100"/>
    </location>
    <ligand>
        <name>Zn(2+)</name>
        <dbReference type="ChEBI" id="CHEBI:29105"/>
        <label>1</label>
    </ligand>
</feature>
<feature type="binding site" description="via carbamate group" evidence="1">
    <location>
        <position position="100"/>
    </location>
    <ligand>
        <name>Zn(2+)</name>
        <dbReference type="ChEBI" id="CHEBI:29105"/>
        <label>2</label>
    </ligand>
</feature>
<feature type="binding site" evidence="1">
    <location>
        <position position="137"/>
    </location>
    <ligand>
        <name>substrate</name>
    </ligand>
</feature>
<feature type="binding site" evidence="1">
    <location>
        <position position="137"/>
    </location>
    <ligand>
        <name>Zn(2+)</name>
        <dbReference type="ChEBI" id="CHEBI:29105"/>
        <label>2</label>
    </ligand>
</feature>
<feature type="binding site" evidence="1">
    <location>
        <position position="175"/>
    </location>
    <ligand>
        <name>Zn(2+)</name>
        <dbReference type="ChEBI" id="CHEBI:29105"/>
        <label>2</label>
    </ligand>
</feature>
<feature type="binding site" evidence="1">
    <location>
        <position position="220"/>
    </location>
    <ligand>
        <name>substrate</name>
    </ligand>
</feature>
<feature type="binding site" evidence="1">
    <location>
        <position position="248"/>
    </location>
    <ligand>
        <name>Zn(2+)</name>
        <dbReference type="ChEBI" id="CHEBI:29105"/>
        <label>1</label>
    </ligand>
</feature>
<feature type="binding site" evidence="1">
    <location>
        <position position="252"/>
    </location>
    <ligand>
        <name>substrate</name>
    </ligand>
</feature>
<feature type="binding site" evidence="1">
    <location>
        <position position="264"/>
    </location>
    <ligand>
        <name>substrate</name>
    </ligand>
</feature>
<feature type="modified residue" description="N6-carboxylysine" evidence="1">
    <location>
        <position position="100"/>
    </location>
</feature>
<name>PYRC_ROSDO</name>
<accession>Q163V6</accession>
<proteinExistence type="inferred from homology"/>
<sequence>MTKTLTIRRPDDWHLHLRDGAMLRAVLPETTAHFARAIIMPNLVPPVVTFAQAQDYHARILAALPEGAEFTPLMTLYLTEDTDPDDVAAAHANGLVHAVKLYPAGATTNSASGVANFDNIRAVLERMAEIGLPLCVHGEVTDDDIDIFDREAVFIDRVLDPIRQATPGLRVVMEHITTRNAVDYATAQDDTLGATITTHHLVINRNHILAGGIKPHYYCLPVAKREEHRLALRAAATSGDARFFLGTDSAPHTDANKLLPCGCAGCFTATNTMSILAHVFEEEQALERLEGFASLHGPAFYRLPANEARLTLTKTPATFPSHIETEDGPVTVFDPGFVPNWTVV</sequence>
<organism>
    <name type="scientific">Roseobacter denitrificans (strain ATCC 33942 / OCh 114)</name>
    <name type="common">Erythrobacter sp. (strain OCh 114)</name>
    <name type="synonym">Roseobacter denitrificans</name>
    <dbReference type="NCBI Taxonomy" id="375451"/>
    <lineage>
        <taxon>Bacteria</taxon>
        <taxon>Pseudomonadati</taxon>
        <taxon>Pseudomonadota</taxon>
        <taxon>Alphaproteobacteria</taxon>
        <taxon>Rhodobacterales</taxon>
        <taxon>Roseobacteraceae</taxon>
        <taxon>Roseobacter</taxon>
    </lineage>
</organism>
<gene>
    <name evidence="1" type="primary">pyrC</name>
    <name type="ordered locus">RD1_3235</name>
</gene>
<protein>
    <recommendedName>
        <fullName evidence="1">Dihydroorotase</fullName>
        <shortName evidence="1">DHOase</shortName>
        <ecNumber evidence="1">3.5.2.3</ecNumber>
    </recommendedName>
</protein>